<evidence type="ECO:0000255" key="1">
    <source>
        <dbReference type="HAMAP-Rule" id="MF_01398"/>
    </source>
</evidence>
<keyword id="KW-0066">ATP synthesis</keyword>
<keyword id="KW-1003">Cell membrane</keyword>
<keyword id="KW-0138">CF(0)</keyword>
<keyword id="KW-0375">Hydrogen ion transport</keyword>
<keyword id="KW-0406">Ion transport</keyword>
<keyword id="KW-0472">Membrane</keyword>
<keyword id="KW-0812">Transmembrane</keyword>
<keyword id="KW-1133">Transmembrane helix</keyword>
<keyword id="KW-0813">Transport</keyword>
<sequence>MTETANLFVLGAAGGVEWGTVIVQVLTFIVLLALLKKFAWGPLKDVMDKRERDINRDIDDAEQAKLNAQKLEEENKQKLKETQEEVQKILEDAKVQARQQQEQIIHEANVRANGMIETAQSEINSQKERAIADINNQVSELSVLIASKVLRKEISEQDQKALVDKYLKEAGDK</sequence>
<comment type="function">
    <text evidence="1">F(1)F(0) ATP synthase produces ATP from ADP in the presence of a proton or sodium gradient. F-type ATPases consist of two structural domains, F(1) containing the extramembraneous catalytic core and F(0) containing the membrane proton channel, linked together by a central stalk and a peripheral stalk. During catalysis, ATP synthesis in the catalytic domain of F(1) is coupled via a rotary mechanism of the central stalk subunits to proton translocation.</text>
</comment>
<comment type="function">
    <text evidence="1">Component of the F(0) channel, it forms part of the peripheral stalk, linking F(1) to F(0).</text>
</comment>
<comment type="subunit">
    <text evidence="1">F-type ATPases have 2 components, F(1) - the catalytic core - and F(0) - the membrane proton channel. F(1) has five subunits: alpha(3), beta(3), gamma(1), delta(1), epsilon(1). F(0) has three main subunits: a(1), b(2) and c(10-14). The alpha and beta chains form an alternating ring which encloses part of the gamma chain. F(1) is attached to F(0) by a central stalk formed by the gamma and epsilon chains, while a peripheral stalk is formed by the delta and b chains.</text>
</comment>
<comment type="subcellular location">
    <subcellularLocation>
        <location evidence="1">Cell membrane</location>
        <topology evidence="1">Single-pass membrane protein</topology>
    </subcellularLocation>
</comment>
<comment type="similarity">
    <text evidence="1">Belongs to the ATPase B chain family.</text>
</comment>
<organism>
    <name type="scientific">Staphylococcus aureus (strain MSSA476)</name>
    <dbReference type="NCBI Taxonomy" id="282459"/>
    <lineage>
        <taxon>Bacteria</taxon>
        <taxon>Bacillati</taxon>
        <taxon>Bacillota</taxon>
        <taxon>Bacilli</taxon>
        <taxon>Bacillales</taxon>
        <taxon>Staphylococcaceae</taxon>
        <taxon>Staphylococcus</taxon>
    </lineage>
</organism>
<reference key="1">
    <citation type="journal article" date="2004" name="Proc. Natl. Acad. Sci. U.S.A.">
        <title>Complete genomes of two clinical Staphylococcus aureus strains: evidence for the rapid evolution of virulence and drug resistance.</title>
        <authorList>
            <person name="Holden M.T.G."/>
            <person name="Feil E.J."/>
            <person name="Lindsay J.A."/>
            <person name="Peacock S.J."/>
            <person name="Day N.P.J."/>
            <person name="Enright M.C."/>
            <person name="Foster T.J."/>
            <person name="Moore C.E."/>
            <person name="Hurst L."/>
            <person name="Atkin R."/>
            <person name="Barron A."/>
            <person name="Bason N."/>
            <person name="Bentley S.D."/>
            <person name="Chillingworth C."/>
            <person name="Chillingworth T."/>
            <person name="Churcher C."/>
            <person name="Clark L."/>
            <person name="Corton C."/>
            <person name="Cronin A."/>
            <person name="Doggett J."/>
            <person name="Dowd L."/>
            <person name="Feltwell T."/>
            <person name="Hance Z."/>
            <person name="Harris B."/>
            <person name="Hauser H."/>
            <person name="Holroyd S."/>
            <person name="Jagels K."/>
            <person name="James K.D."/>
            <person name="Lennard N."/>
            <person name="Line A."/>
            <person name="Mayes R."/>
            <person name="Moule S."/>
            <person name="Mungall K."/>
            <person name="Ormond D."/>
            <person name="Quail M.A."/>
            <person name="Rabbinowitsch E."/>
            <person name="Rutherford K.M."/>
            <person name="Sanders M."/>
            <person name="Sharp S."/>
            <person name="Simmonds M."/>
            <person name="Stevens K."/>
            <person name="Whitehead S."/>
            <person name="Barrell B.G."/>
            <person name="Spratt B.G."/>
            <person name="Parkhill J."/>
        </authorList>
    </citation>
    <scope>NUCLEOTIDE SEQUENCE [LARGE SCALE GENOMIC DNA]</scope>
    <source>
        <strain>MSSA476</strain>
    </source>
</reference>
<name>ATPF_STAAS</name>
<protein>
    <recommendedName>
        <fullName evidence="1">ATP synthase subunit b</fullName>
    </recommendedName>
    <alternativeName>
        <fullName evidence="1">ATP synthase F(0) sector subunit b</fullName>
    </alternativeName>
    <alternativeName>
        <fullName evidence="1">ATPase subunit I</fullName>
    </alternativeName>
    <alternativeName>
        <fullName evidence="1">F-type ATPase subunit b</fullName>
        <shortName evidence="1">F-ATPase subunit b</shortName>
    </alternativeName>
</protein>
<accession>Q6G7K3</accession>
<feature type="chain" id="PRO_0000223711" description="ATP synthase subunit b">
    <location>
        <begin position="1"/>
        <end position="173"/>
    </location>
</feature>
<feature type="transmembrane region" description="Helical" evidence="1">
    <location>
        <begin position="15"/>
        <end position="35"/>
    </location>
</feature>
<dbReference type="EMBL" id="BX571857">
    <property type="protein sequence ID" value="CAG43818.1"/>
    <property type="molecule type" value="Genomic_DNA"/>
</dbReference>
<dbReference type="RefSeq" id="WP_000140679.1">
    <property type="nucleotide sequence ID" value="NC_002953.3"/>
</dbReference>
<dbReference type="SMR" id="Q6G7K3"/>
<dbReference type="KEGG" id="sas:SAS2010"/>
<dbReference type="HOGENOM" id="CLU_079215_4_2_9"/>
<dbReference type="GO" id="GO:0005886">
    <property type="term" value="C:plasma membrane"/>
    <property type="evidence" value="ECO:0007669"/>
    <property type="project" value="UniProtKB-SubCell"/>
</dbReference>
<dbReference type="GO" id="GO:0045259">
    <property type="term" value="C:proton-transporting ATP synthase complex"/>
    <property type="evidence" value="ECO:0007669"/>
    <property type="project" value="UniProtKB-KW"/>
</dbReference>
<dbReference type="GO" id="GO:0046933">
    <property type="term" value="F:proton-transporting ATP synthase activity, rotational mechanism"/>
    <property type="evidence" value="ECO:0007669"/>
    <property type="project" value="UniProtKB-UniRule"/>
</dbReference>
<dbReference type="GO" id="GO:0046961">
    <property type="term" value="F:proton-transporting ATPase activity, rotational mechanism"/>
    <property type="evidence" value="ECO:0007669"/>
    <property type="project" value="TreeGrafter"/>
</dbReference>
<dbReference type="CDD" id="cd06503">
    <property type="entry name" value="ATP-synt_Fo_b"/>
    <property type="match status" value="1"/>
</dbReference>
<dbReference type="HAMAP" id="MF_01398">
    <property type="entry name" value="ATP_synth_b_bprime"/>
    <property type="match status" value="1"/>
</dbReference>
<dbReference type="InterPro" id="IPR028987">
    <property type="entry name" value="ATP_synth_B-like_membr_sf"/>
</dbReference>
<dbReference type="InterPro" id="IPR002146">
    <property type="entry name" value="ATP_synth_b/b'su_bac/chlpt"/>
</dbReference>
<dbReference type="InterPro" id="IPR005864">
    <property type="entry name" value="ATP_synth_F0_bsu_bac"/>
</dbReference>
<dbReference type="InterPro" id="IPR050059">
    <property type="entry name" value="ATP_synthase_B_chain"/>
</dbReference>
<dbReference type="NCBIfam" id="TIGR01144">
    <property type="entry name" value="ATP_synt_b"/>
    <property type="match status" value="1"/>
</dbReference>
<dbReference type="NCBIfam" id="NF009987">
    <property type="entry name" value="PRK13453.1"/>
    <property type="match status" value="1"/>
</dbReference>
<dbReference type="PANTHER" id="PTHR33445:SF1">
    <property type="entry name" value="ATP SYNTHASE SUBUNIT B"/>
    <property type="match status" value="1"/>
</dbReference>
<dbReference type="PANTHER" id="PTHR33445">
    <property type="entry name" value="ATP SYNTHASE SUBUNIT B', CHLOROPLASTIC"/>
    <property type="match status" value="1"/>
</dbReference>
<dbReference type="Pfam" id="PF00430">
    <property type="entry name" value="ATP-synt_B"/>
    <property type="match status" value="1"/>
</dbReference>
<dbReference type="SUPFAM" id="SSF81573">
    <property type="entry name" value="F1F0 ATP synthase subunit B, membrane domain"/>
    <property type="match status" value="1"/>
</dbReference>
<proteinExistence type="inferred from homology"/>
<gene>
    <name evidence="1" type="primary">atpF</name>
    <name type="ordered locus">SAS2010</name>
</gene>